<name>EFTS_EHRRW</name>
<keyword id="KW-0963">Cytoplasm</keyword>
<keyword id="KW-0251">Elongation factor</keyword>
<keyword id="KW-0648">Protein biosynthesis</keyword>
<accession>Q5HB23</accession>
<accession>Q5FEM8</accession>
<protein>
    <recommendedName>
        <fullName evidence="1">Elongation factor Ts</fullName>
        <shortName evidence="1">EF-Ts</shortName>
    </recommendedName>
</protein>
<sequence>MKVDINAIKELRDLTGAGVGDCKDALTSCNGDIEKAKTYLREQGIAKAYKKSNKDVSDGLVAICIDGNKGAILEVNSETDFVARNEKFQKLVLNLAFLANQYGIENIEDFLKCEYANNTNINDEIMSNIAVIGENIHLNKIGCLSVSSGVVCGYIHNPIVDNLGKVGAIVALESNCDVEKLKIFARQIAMHIVATKPEALSLDVLDQNVIDKERDIIKKQVEQLNKPASVLEKIIDGRMAKFYQEVVLMNQMFIMDSQFTVSELIKKKEEELGSSINIVDYKLFIINK</sequence>
<gene>
    <name evidence="1" type="primary">tsf</name>
    <name type="ordered locus">Erum5080</name>
    <name type="ordered locus">ERWE_CDS_05330</name>
</gene>
<feature type="chain" id="PRO_0000241482" description="Elongation factor Ts">
    <location>
        <begin position="1"/>
        <end position="288"/>
    </location>
</feature>
<feature type="region of interest" description="Involved in Mg(2+) ion dislocation from EF-Tu" evidence="1">
    <location>
        <begin position="79"/>
        <end position="82"/>
    </location>
</feature>
<evidence type="ECO:0000255" key="1">
    <source>
        <dbReference type="HAMAP-Rule" id="MF_00050"/>
    </source>
</evidence>
<dbReference type="EMBL" id="CR767821">
    <property type="protein sequence ID" value="CAH58237.1"/>
    <property type="molecule type" value="Genomic_DNA"/>
</dbReference>
<dbReference type="EMBL" id="CR925678">
    <property type="protein sequence ID" value="CAI27027.1"/>
    <property type="molecule type" value="Genomic_DNA"/>
</dbReference>
<dbReference type="RefSeq" id="WP_011155188.1">
    <property type="nucleotide sequence ID" value="NC_005295.2"/>
</dbReference>
<dbReference type="SMR" id="Q5HB23"/>
<dbReference type="GeneID" id="33057894"/>
<dbReference type="KEGG" id="eru:Erum5080"/>
<dbReference type="KEGG" id="erw:ERWE_CDS_05330"/>
<dbReference type="eggNOG" id="COG0264">
    <property type="taxonomic scope" value="Bacteria"/>
</dbReference>
<dbReference type="HOGENOM" id="CLU_047155_2_0_5"/>
<dbReference type="Proteomes" id="UP000001021">
    <property type="component" value="Chromosome"/>
</dbReference>
<dbReference type="GO" id="GO:0005737">
    <property type="term" value="C:cytoplasm"/>
    <property type="evidence" value="ECO:0007669"/>
    <property type="project" value="UniProtKB-SubCell"/>
</dbReference>
<dbReference type="GO" id="GO:0003746">
    <property type="term" value="F:translation elongation factor activity"/>
    <property type="evidence" value="ECO:0007669"/>
    <property type="project" value="UniProtKB-UniRule"/>
</dbReference>
<dbReference type="CDD" id="cd14275">
    <property type="entry name" value="UBA_EF-Ts"/>
    <property type="match status" value="1"/>
</dbReference>
<dbReference type="FunFam" id="1.10.286.20:FF:000001">
    <property type="entry name" value="Elongation factor Ts"/>
    <property type="match status" value="1"/>
</dbReference>
<dbReference type="FunFam" id="1.10.8.10:FF:000001">
    <property type="entry name" value="Elongation factor Ts"/>
    <property type="match status" value="1"/>
</dbReference>
<dbReference type="Gene3D" id="1.10.286.20">
    <property type="match status" value="1"/>
</dbReference>
<dbReference type="Gene3D" id="1.10.8.10">
    <property type="entry name" value="DNA helicase RuvA subunit, C-terminal domain"/>
    <property type="match status" value="1"/>
</dbReference>
<dbReference type="Gene3D" id="3.30.479.20">
    <property type="entry name" value="Elongation factor Ts, dimerisation domain"/>
    <property type="match status" value="2"/>
</dbReference>
<dbReference type="HAMAP" id="MF_00050">
    <property type="entry name" value="EF_Ts"/>
    <property type="match status" value="1"/>
</dbReference>
<dbReference type="InterPro" id="IPR036402">
    <property type="entry name" value="EF-Ts_dimer_sf"/>
</dbReference>
<dbReference type="InterPro" id="IPR001816">
    <property type="entry name" value="Transl_elong_EFTs/EF1B"/>
</dbReference>
<dbReference type="InterPro" id="IPR014039">
    <property type="entry name" value="Transl_elong_EFTs/EF1B_dimer"/>
</dbReference>
<dbReference type="InterPro" id="IPR018101">
    <property type="entry name" value="Transl_elong_Ts_CS"/>
</dbReference>
<dbReference type="InterPro" id="IPR009060">
    <property type="entry name" value="UBA-like_sf"/>
</dbReference>
<dbReference type="NCBIfam" id="TIGR00116">
    <property type="entry name" value="tsf"/>
    <property type="match status" value="1"/>
</dbReference>
<dbReference type="PANTHER" id="PTHR11741">
    <property type="entry name" value="ELONGATION FACTOR TS"/>
    <property type="match status" value="1"/>
</dbReference>
<dbReference type="PANTHER" id="PTHR11741:SF0">
    <property type="entry name" value="ELONGATION FACTOR TS, MITOCHONDRIAL"/>
    <property type="match status" value="1"/>
</dbReference>
<dbReference type="Pfam" id="PF00889">
    <property type="entry name" value="EF_TS"/>
    <property type="match status" value="1"/>
</dbReference>
<dbReference type="SUPFAM" id="SSF54713">
    <property type="entry name" value="Elongation factor Ts (EF-Ts), dimerisation domain"/>
    <property type="match status" value="1"/>
</dbReference>
<dbReference type="SUPFAM" id="SSF46934">
    <property type="entry name" value="UBA-like"/>
    <property type="match status" value="1"/>
</dbReference>
<dbReference type="PROSITE" id="PS01127">
    <property type="entry name" value="EF_TS_2"/>
    <property type="match status" value="1"/>
</dbReference>
<organism>
    <name type="scientific">Ehrlichia ruminantium (strain Welgevonden)</name>
    <dbReference type="NCBI Taxonomy" id="254945"/>
    <lineage>
        <taxon>Bacteria</taxon>
        <taxon>Pseudomonadati</taxon>
        <taxon>Pseudomonadota</taxon>
        <taxon>Alphaproteobacteria</taxon>
        <taxon>Rickettsiales</taxon>
        <taxon>Anaplasmataceae</taxon>
        <taxon>Ehrlichia</taxon>
    </lineage>
</organism>
<comment type="function">
    <text evidence="1">Associates with the EF-Tu.GDP complex and induces the exchange of GDP to GTP. It remains bound to the aminoacyl-tRNA.EF-Tu.GTP complex up to the GTP hydrolysis stage on the ribosome.</text>
</comment>
<comment type="subcellular location">
    <subcellularLocation>
        <location evidence="1">Cytoplasm</location>
    </subcellularLocation>
</comment>
<comment type="similarity">
    <text evidence="1">Belongs to the EF-Ts family.</text>
</comment>
<reference key="1">
    <citation type="journal article" date="2005" name="Proc. Natl. Acad. Sci. U.S.A.">
        <title>The genome of the heartwater agent Ehrlichia ruminantium contains multiple tandem repeats of actively variable copy number.</title>
        <authorList>
            <person name="Collins N.E."/>
            <person name="Liebenberg J."/>
            <person name="de Villiers E.P."/>
            <person name="Brayton K.A."/>
            <person name="Louw E."/>
            <person name="Pretorius A."/>
            <person name="Faber F.E."/>
            <person name="van Heerden H."/>
            <person name="Josemans A."/>
            <person name="van Kleef M."/>
            <person name="Steyn H.C."/>
            <person name="van Strijp M.F."/>
            <person name="Zweygarth E."/>
            <person name="Jongejan F."/>
            <person name="Maillard J.C."/>
            <person name="Berthier D."/>
            <person name="Botha M."/>
            <person name="Joubert F."/>
            <person name="Corton C.H."/>
            <person name="Thomson N.R."/>
            <person name="Allsopp M.T."/>
            <person name="Allsopp B.A."/>
        </authorList>
    </citation>
    <scope>NUCLEOTIDE SEQUENCE [LARGE SCALE GENOMIC DNA]</scope>
    <source>
        <strain>Welgevonden</strain>
    </source>
</reference>
<reference key="2">
    <citation type="journal article" date="2006" name="J. Bacteriol.">
        <title>Comparative genomic analysis of three strains of Ehrlichia ruminantium reveals an active process of genome size plasticity.</title>
        <authorList>
            <person name="Frutos R."/>
            <person name="Viari A."/>
            <person name="Ferraz C."/>
            <person name="Morgat A."/>
            <person name="Eychenie S."/>
            <person name="Kandassamy Y."/>
            <person name="Chantal I."/>
            <person name="Bensaid A."/>
            <person name="Coissac E."/>
            <person name="Vachiery N."/>
            <person name="Demaille J."/>
            <person name="Martinez D."/>
        </authorList>
    </citation>
    <scope>NUCLEOTIDE SEQUENCE [LARGE SCALE GENOMIC DNA]</scope>
    <source>
        <strain>Welgevonden</strain>
    </source>
</reference>
<proteinExistence type="inferred from homology"/>